<protein>
    <recommendedName>
        <fullName>ADP,ATP carrier protein 4</fullName>
    </recommendedName>
    <alternativeName>
        <fullName>ADP/ATP translocase 4</fullName>
    </alternativeName>
</protein>
<name>TLCD_RICBR</name>
<dbReference type="EMBL" id="CP000087">
    <property type="protein sequence ID" value="ABE04851.1"/>
    <property type="molecule type" value="Genomic_DNA"/>
</dbReference>
<dbReference type="RefSeq" id="WP_011477438.1">
    <property type="nucleotide sequence ID" value="NC_007940.1"/>
</dbReference>
<dbReference type="KEGG" id="rbe:RBE_0770"/>
<dbReference type="eggNOG" id="COG3202">
    <property type="taxonomic scope" value="Bacteria"/>
</dbReference>
<dbReference type="HOGENOM" id="CLU_023964_0_1_5"/>
<dbReference type="OrthoDB" id="19786at2"/>
<dbReference type="Proteomes" id="UP000001951">
    <property type="component" value="Chromosome"/>
</dbReference>
<dbReference type="GO" id="GO:0005886">
    <property type="term" value="C:plasma membrane"/>
    <property type="evidence" value="ECO:0007669"/>
    <property type="project" value="UniProtKB-SubCell"/>
</dbReference>
<dbReference type="GO" id="GO:0005524">
    <property type="term" value="F:ATP binding"/>
    <property type="evidence" value="ECO:0007669"/>
    <property type="project" value="UniProtKB-KW"/>
</dbReference>
<dbReference type="GO" id="GO:0005471">
    <property type="term" value="F:ATP:ADP antiporter activity"/>
    <property type="evidence" value="ECO:0007669"/>
    <property type="project" value="InterPro"/>
</dbReference>
<dbReference type="InterPro" id="IPR004667">
    <property type="entry name" value="ADP_ATP_car_bac_type"/>
</dbReference>
<dbReference type="InterPro" id="IPR036259">
    <property type="entry name" value="MFS_trans_sf"/>
</dbReference>
<dbReference type="NCBIfam" id="TIGR00769">
    <property type="entry name" value="AAA"/>
    <property type="match status" value="1"/>
</dbReference>
<dbReference type="PANTHER" id="PTHR31187">
    <property type="match status" value="1"/>
</dbReference>
<dbReference type="PANTHER" id="PTHR31187:SF1">
    <property type="entry name" value="ADP,ATP CARRIER PROTEIN 1"/>
    <property type="match status" value="1"/>
</dbReference>
<dbReference type="Pfam" id="PF03219">
    <property type="entry name" value="TLC"/>
    <property type="match status" value="1"/>
</dbReference>
<dbReference type="SUPFAM" id="SSF103473">
    <property type="entry name" value="MFS general substrate transporter"/>
    <property type="match status" value="1"/>
</dbReference>
<comment type="function">
    <text evidence="1">Provides the rickettsial cell with host ATP in exchange for rickettsial ADP. This is an obligate exchange system. This energy acquiring activity is an important component of rickettsial parasitism (By similarity).</text>
</comment>
<comment type="subcellular location">
    <subcellularLocation>
        <location>Cell membrane</location>
        <topology>Multi-pass membrane protein</topology>
    </subcellularLocation>
</comment>
<comment type="similarity">
    <text evidence="3">Belongs to the ADP/ATP translocase tlc family.</text>
</comment>
<accession>Q1RIG3</accession>
<proteinExistence type="inferred from homology"/>
<gene>
    <name type="primary">tlcD</name>
    <name type="synonym">tlc4</name>
    <name type="ordered locus">RBE_0770</name>
</gene>
<feature type="chain" id="PRO_0000286484" description="ADP,ATP carrier protein 4">
    <location>
        <begin position="1"/>
        <end position="520"/>
    </location>
</feature>
<feature type="transmembrane region" description="Helical" evidence="2">
    <location>
        <begin position="43"/>
        <end position="63"/>
    </location>
</feature>
<feature type="transmembrane region" description="Helical" evidence="2">
    <location>
        <begin position="80"/>
        <end position="100"/>
    </location>
</feature>
<feature type="transmembrane region" description="Helical" evidence="2">
    <location>
        <begin position="111"/>
        <end position="131"/>
    </location>
</feature>
<feature type="transmembrane region" description="Helical" evidence="2">
    <location>
        <begin position="166"/>
        <end position="186"/>
    </location>
</feature>
<feature type="transmembrane region" description="Helical" evidence="2">
    <location>
        <begin position="201"/>
        <end position="221"/>
    </location>
</feature>
<feature type="transmembrane region" description="Helical" evidence="2">
    <location>
        <begin position="240"/>
        <end position="260"/>
    </location>
</feature>
<feature type="transmembrane region" description="Helical" evidence="2">
    <location>
        <begin position="305"/>
        <end position="325"/>
    </location>
</feature>
<feature type="transmembrane region" description="Helical" evidence="2">
    <location>
        <begin position="339"/>
        <end position="359"/>
    </location>
</feature>
<feature type="transmembrane region" description="Helical" evidence="2">
    <location>
        <begin position="370"/>
        <end position="390"/>
    </location>
</feature>
<feature type="transmembrane region" description="Helical" evidence="2">
    <location>
        <begin position="399"/>
        <end position="419"/>
    </location>
</feature>
<feature type="transmembrane region" description="Helical" evidence="2">
    <location>
        <begin position="462"/>
        <end position="482"/>
    </location>
</feature>
<feature type="transmembrane region" description="Helical" evidence="2">
    <location>
        <begin position="485"/>
        <end position="505"/>
    </location>
</feature>
<evidence type="ECO:0000250" key="1"/>
<evidence type="ECO:0000255" key="2"/>
<evidence type="ECO:0000305" key="3"/>
<organism>
    <name type="scientific">Rickettsia bellii (strain RML369-C)</name>
    <dbReference type="NCBI Taxonomy" id="336407"/>
    <lineage>
        <taxon>Bacteria</taxon>
        <taxon>Pseudomonadati</taxon>
        <taxon>Pseudomonadota</taxon>
        <taxon>Alphaproteobacteria</taxon>
        <taxon>Rickettsiales</taxon>
        <taxon>Rickettsiaceae</taxon>
        <taxon>Rickettsieae</taxon>
        <taxon>Rickettsia</taxon>
        <taxon>belli group</taxon>
    </lineage>
</organism>
<reference key="1">
    <citation type="journal article" date="2006" name="PLoS Genet.">
        <title>Genome sequence of Rickettsia bellii illuminates the role of amoebae in gene exchanges between intracellular pathogens.</title>
        <authorList>
            <person name="Ogata H."/>
            <person name="La Scola B."/>
            <person name="Audic S."/>
            <person name="Renesto P."/>
            <person name="Blanc G."/>
            <person name="Robert C."/>
            <person name="Fournier P.-E."/>
            <person name="Claverie J.-M."/>
            <person name="Raoult D."/>
        </authorList>
    </citation>
    <scope>NUCLEOTIDE SEQUENCE [LARGE SCALE GENOMIC DNA]</scope>
    <source>
        <strain>RML369-C</strain>
    </source>
</reference>
<keyword id="KW-0067">ATP-binding</keyword>
<keyword id="KW-1003">Cell membrane</keyword>
<keyword id="KW-0472">Membrane</keyword>
<keyword id="KW-0547">Nucleotide-binding</keyword>
<keyword id="KW-0812">Transmembrane</keyword>
<keyword id="KW-1133">Transmembrane helix</keyword>
<keyword id="KW-0813">Transport</keyword>
<sequence length="520" mass="58912">MTINQNNSNHTFSSHNLDNSPHKINKLINKFSDYIWPIKRQELSKFLFITLLMFCILFIQNLIRALKDSIVTTMIGAETISFLKFWGVMPCAFLMTAIYVKLVNRMKAENIFYLIISIFLAFFALFAYVIFPNHEILHLSPTTAQNLIASLPNLKWFILLLSKWSFSLFYIIAELWPNVAFALLFWQFVNNITTVEESKRFYPLFGLLSQTGIYLAGQFLENLSHINEYVVAKFSLQASFHTLSVQIILTIVLILGIVGIKTFWLLNHKVLDKEHMALLRFKAKKKTMTIAESFQMILSSRHIRLIATLLICYGIAINLVEGPWKAAATKIYKTPTEYAAFIGNYLSYTGAFTILFVVLGSNIVRKLGWFTAAIITPIIVFTTGILFFAVNNFESSAGLIVASFILTDPALIAITIGAIQNVLSKSSKYTLFDSTKEMAYVPLDKEIKIKGKAAADVLGTKLGKSGSAFLQSLVFIILPSASYQSISVCLMFIFIITCLIWFWAVKELNKEYKKSVKFSQ</sequence>